<sequence length="40" mass="4109">MKKLVLCVSILAVILSGVALTQLSTDSPSNIQVAERPVGG</sequence>
<dbReference type="EMBL" id="AL009126">
    <property type="protein sequence ID" value="CAB13784.1"/>
    <property type="molecule type" value="Genomic_DNA"/>
</dbReference>
<dbReference type="PIR" id="F69677">
    <property type="entry name" value="F69677"/>
</dbReference>
<dbReference type="RefSeq" id="NP_389773.1">
    <property type="nucleotide sequence ID" value="NC_000964.3"/>
</dbReference>
<dbReference type="RefSeq" id="WP_004399440.1">
    <property type="nucleotide sequence ID" value="NZ_OZ025638.1"/>
</dbReference>
<dbReference type="FunCoup" id="O31840">
    <property type="interactions" value="101"/>
</dbReference>
<dbReference type="STRING" id="224308.BSU18920"/>
<dbReference type="PaxDb" id="224308-BSU18920"/>
<dbReference type="EnsemblBacteria" id="CAB13784">
    <property type="protein sequence ID" value="CAB13784"/>
    <property type="gene ID" value="BSU_18920"/>
</dbReference>
<dbReference type="GeneID" id="86873333"/>
<dbReference type="GeneID" id="939608"/>
<dbReference type="KEGG" id="bsu:BSU18920"/>
<dbReference type="PATRIC" id="fig|224308.179.peg.2069"/>
<dbReference type="InParanoid" id="O31840"/>
<dbReference type="OrthoDB" id="2920829at2"/>
<dbReference type="BioCyc" id="BSUB:BSU18920-MONOMER"/>
<dbReference type="Proteomes" id="UP000001570">
    <property type="component" value="Chromosome"/>
</dbReference>
<dbReference type="GO" id="GO:0005737">
    <property type="term" value="C:cytoplasm"/>
    <property type="evidence" value="ECO:0007669"/>
    <property type="project" value="UniProtKB-SubCell"/>
</dbReference>
<dbReference type="GO" id="GO:0005576">
    <property type="term" value="C:extracellular region"/>
    <property type="evidence" value="ECO:0007669"/>
    <property type="project" value="UniProtKB-SubCell"/>
</dbReference>
<dbReference type="GO" id="GO:0030420">
    <property type="term" value="P:establishment of competence for transformation"/>
    <property type="evidence" value="ECO:0007669"/>
    <property type="project" value="UniProtKB-KW"/>
</dbReference>
<dbReference type="InterPro" id="IPR053652">
    <property type="entry name" value="Phr_regulator"/>
</dbReference>
<dbReference type="InterPro" id="IPR030968">
    <property type="entry name" value="RapG/K_inhib"/>
</dbReference>
<dbReference type="NCBIfam" id="NF038040">
    <property type="entry name" value="phero_PhrK_fam"/>
    <property type="match status" value="1"/>
</dbReference>
<dbReference type="NCBIfam" id="TIGR04429">
    <property type="entry name" value="Phr_nterm"/>
    <property type="match status" value="1"/>
</dbReference>
<keyword id="KW-0178">Competence</keyword>
<keyword id="KW-0963">Cytoplasm</keyword>
<keyword id="KW-1185">Reference proteome</keyword>
<keyword id="KW-0964">Secreted</keyword>
<proteinExistence type="inferred from homology"/>
<protein>
    <recommendedName>
        <fullName evidence="3">RapK inhibitor</fullName>
    </recommendedName>
</protein>
<comment type="function">
    <text evidence="1 2">Signaling molecule involved in the regulation of genetic competence development (PubMed:16816200). Secreted during production, but the mature peptide acts intracellularly, indicating that it needs to be imported into the cell to function (By similarity). Stimulates expression of the genes controlled by ComA, a transcriptional factor that regulates the development of genetic competence (PubMed:16816200). Acts by inhibiting RapK, which regulates the activity of ComA (PubMed:16816200).</text>
</comment>
<comment type="subcellular location">
    <subcellularLocation>
        <location evidence="1">Secreted</location>
    </subcellularLocation>
    <subcellularLocation>
        <location evidence="1">Cytoplasm</location>
    </subcellularLocation>
    <text evidence="1">Produced through an export-import maturation process.</text>
</comment>
<comment type="PTM">
    <text evidence="1">Contains a predicted signal peptide cleavage site in the N-terminal region, however the propeptide is probably only subject to processing events at the ends of the mature peptide.</text>
</comment>
<comment type="disruption phenotype">
    <text evidence="2">Deletion of the gene results in decreased expression of genes activated by ComA, and significantly changes the expression of 40 operons.</text>
</comment>
<comment type="miscellaneous">
    <text evidence="2">CSF, PhrF and PhrK stimulate ComA-dependent gene expression to different levels and are all required for full expression of genes activated by ComA.</text>
</comment>
<comment type="similarity">
    <text evidence="3">Belongs to the Phr family.</text>
</comment>
<reference key="1">
    <citation type="journal article" date="1997" name="Nature">
        <title>The complete genome sequence of the Gram-positive bacterium Bacillus subtilis.</title>
        <authorList>
            <person name="Kunst F."/>
            <person name="Ogasawara N."/>
            <person name="Moszer I."/>
            <person name="Albertini A.M."/>
            <person name="Alloni G."/>
            <person name="Azevedo V."/>
            <person name="Bertero M.G."/>
            <person name="Bessieres P."/>
            <person name="Bolotin A."/>
            <person name="Borchert S."/>
            <person name="Borriss R."/>
            <person name="Boursier L."/>
            <person name="Brans A."/>
            <person name="Braun M."/>
            <person name="Brignell S.C."/>
            <person name="Bron S."/>
            <person name="Brouillet S."/>
            <person name="Bruschi C.V."/>
            <person name="Caldwell B."/>
            <person name="Capuano V."/>
            <person name="Carter N.M."/>
            <person name="Choi S.-K."/>
            <person name="Codani J.-J."/>
            <person name="Connerton I.F."/>
            <person name="Cummings N.J."/>
            <person name="Daniel R.A."/>
            <person name="Denizot F."/>
            <person name="Devine K.M."/>
            <person name="Duesterhoeft A."/>
            <person name="Ehrlich S.D."/>
            <person name="Emmerson P.T."/>
            <person name="Entian K.-D."/>
            <person name="Errington J."/>
            <person name="Fabret C."/>
            <person name="Ferrari E."/>
            <person name="Foulger D."/>
            <person name="Fritz C."/>
            <person name="Fujita M."/>
            <person name="Fujita Y."/>
            <person name="Fuma S."/>
            <person name="Galizzi A."/>
            <person name="Galleron N."/>
            <person name="Ghim S.-Y."/>
            <person name="Glaser P."/>
            <person name="Goffeau A."/>
            <person name="Golightly E.J."/>
            <person name="Grandi G."/>
            <person name="Guiseppi G."/>
            <person name="Guy B.J."/>
            <person name="Haga K."/>
            <person name="Haiech J."/>
            <person name="Harwood C.R."/>
            <person name="Henaut A."/>
            <person name="Hilbert H."/>
            <person name="Holsappel S."/>
            <person name="Hosono S."/>
            <person name="Hullo M.-F."/>
            <person name="Itaya M."/>
            <person name="Jones L.-M."/>
            <person name="Joris B."/>
            <person name="Karamata D."/>
            <person name="Kasahara Y."/>
            <person name="Klaerr-Blanchard M."/>
            <person name="Klein C."/>
            <person name="Kobayashi Y."/>
            <person name="Koetter P."/>
            <person name="Koningstein G."/>
            <person name="Krogh S."/>
            <person name="Kumano M."/>
            <person name="Kurita K."/>
            <person name="Lapidus A."/>
            <person name="Lardinois S."/>
            <person name="Lauber J."/>
            <person name="Lazarevic V."/>
            <person name="Lee S.-M."/>
            <person name="Levine A."/>
            <person name="Liu H."/>
            <person name="Masuda S."/>
            <person name="Mauel C."/>
            <person name="Medigue C."/>
            <person name="Medina N."/>
            <person name="Mellado R.P."/>
            <person name="Mizuno M."/>
            <person name="Moestl D."/>
            <person name="Nakai S."/>
            <person name="Noback M."/>
            <person name="Noone D."/>
            <person name="O'Reilly M."/>
            <person name="Ogawa K."/>
            <person name="Ogiwara A."/>
            <person name="Oudega B."/>
            <person name="Park S.-H."/>
            <person name="Parro V."/>
            <person name="Pohl T.M."/>
            <person name="Portetelle D."/>
            <person name="Porwollik S."/>
            <person name="Prescott A.M."/>
            <person name="Presecan E."/>
            <person name="Pujic P."/>
            <person name="Purnelle B."/>
            <person name="Rapoport G."/>
            <person name="Rey M."/>
            <person name="Reynolds S."/>
            <person name="Rieger M."/>
            <person name="Rivolta C."/>
            <person name="Rocha E."/>
            <person name="Roche B."/>
            <person name="Rose M."/>
            <person name="Sadaie Y."/>
            <person name="Sato T."/>
            <person name="Scanlan E."/>
            <person name="Schleich S."/>
            <person name="Schroeter R."/>
            <person name="Scoffone F."/>
            <person name="Sekiguchi J."/>
            <person name="Sekowska A."/>
            <person name="Seror S.J."/>
            <person name="Serror P."/>
            <person name="Shin B.-S."/>
            <person name="Soldo B."/>
            <person name="Sorokin A."/>
            <person name="Tacconi E."/>
            <person name="Takagi T."/>
            <person name="Takahashi H."/>
            <person name="Takemaru K."/>
            <person name="Takeuchi M."/>
            <person name="Tamakoshi A."/>
            <person name="Tanaka T."/>
            <person name="Terpstra P."/>
            <person name="Tognoni A."/>
            <person name="Tosato V."/>
            <person name="Uchiyama S."/>
            <person name="Vandenbol M."/>
            <person name="Vannier F."/>
            <person name="Vassarotti A."/>
            <person name="Viari A."/>
            <person name="Wambutt R."/>
            <person name="Wedler E."/>
            <person name="Wedler H."/>
            <person name="Weitzenegger T."/>
            <person name="Winters P."/>
            <person name="Wipat A."/>
            <person name="Yamamoto H."/>
            <person name="Yamane K."/>
            <person name="Yasumoto K."/>
            <person name="Yata K."/>
            <person name="Yoshida K."/>
            <person name="Yoshikawa H.-F."/>
            <person name="Zumstein E."/>
            <person name="Yoshikawa H."/>
            <person name="Danchin A."/>
        </authorList>
    </citation>
    <scope>NUCLEOTIDE SEQUENCE [LARGE SCALE GENOMIC DNA]</scope>
    <source>
        <strain>168</strain>
    </source>
</reference>
<reference key="2">
    <citation type="journal article" date="2006" name="J. Bacteriol.">
        <title>Modulation of the ComA-dependent quorum response in Bacillus subtilis by multiple Rap proteins and Phr peptides.</title>
        <authorList>
            <person name="Auchtung J.M."/>
            <person name="Lee C.A."/>
            <person name="Grossman A.D."/>
        </authorList>
    </citation>
    <scope>FUNCTION</scope>
    <scope>DISRUPTION PHENOTYPE</scope>
    <source>
        <strain>168 / JH642</strain>
    </source>
</reference>
<feature type="propeptide" id="PRO_0000457006" evidence="3">
    <location>
        <begin position="1"/>
        <end position="34"/>
    </location>
</feature>
<feature type="peptide" id="PRO_0000161734" description="RapK inhibitor">
    <location>
        <begin position="35"/>
        <end position="39"/>
    </location>
</feature>
<feature type="propeptide" id="PRO_0000457007" evidence="3">
    <location>
        <position position="40"/>
    </location>
</feature>
<evidence type="ECO:0000250" key="1">
    <source>
        <dbReference type="UniProtKB" id="P94416"/>
    </source>
</evidence>
<evidence type="ECO:0000269" key="2">
    <source>
    </source>
</evidence>
<evidence type="ECO:0000305" key="3"/>
<gene>
    <name type="primary">phrK</name>
    <name type="ordered locus">BSU18920</name>
</gene>
<organism>
    <name type="scientific">Bacillus subtilis (strain 168)</name>
    <dbReference type="NCBI Taxonomy" id="224308"/>
    <lineage>
        <taxon>Bacteria</taxon>
        <taxon>Bacillati</taxon>
        <taxon>Bacillota</taxon>
        <taxon>Bacilli</taxon>
        <taxon>Bacillales</taxon>
        <taxon>Bacillaceae</taxon>
        <taxon>Bacillus</taxon>
    </lineage>
</organism>
<accession>O31840</accession>
<name>PHRK_BACSU</name>